<accession>O32222</accession>
<evidence type="ECO:0000250" key="1"/>
<evidence type="ECO:0000256" key="2">
    <source>
        <dbReference type="SAM" id="MobiDB-lite"/>
    </source>
</evidence>
<evidence type="ECO:0000269" key="3">
    <source>
    </source>
</evidence>
<evidence type="ECO:0000269" key="4">
    <source>
    </source>
</evidence>
<evidence type="ECO:0000269" key="5">
    <source>
    </source>
</evidence>
<evidence type="ECO:0000305" key="6"/>
<keyword id="KW-0186">Copper</keyword>
<keyword id="KW-0963">Cytoplasm</keyword>
<keyword id="KW-0238">DNA-binding</keyword>
<keyword id="KW-0479">Metal-binding</keyword>
<keyword id="KW-1185">Reference proteome</keyword>
<keyword id="KW-0678">Repressor</keyword>
<keyword id="KW-0804">Transcription</keyword>
<keyword id="KW-0805">Transcription regulation</keyword>
<proteinExistence type="evidence at protein level"/>
<reference key="1">
    <citation type="journal article" date="1997" name="Nature">
        <title>The complete genome sequence of the Gram-positive bacterium Bacillus subtilis.</title>
        <authorList>
            <person name="Kunst F."/>
            <person name="Ogasawara N."/>
            <person name="Moszer I."/>
            <person name="Albertini A.M."/>
            <person name="Alloni G."/>
            <person name="Azevedo V."/>
            <person name="Bertero M.G."/>
            <person name="Bessieres P."/>
            <person name="Bolotin A."/>
            <person name="Borchert S."/>
            <person name="Borriss R."/>
            <person name="Boursier L."/>
            <person name="Brans A."/>
            <person name="Braun M."/>
            <person name="Brignell S.C."/>
            <person name="Bron S."/>
            <person name="Brouillet S."/>
            <person name="Bruschi C.V."/>
            <person name="Caldwell B."/>
            <person name="Capuano V."/>
            <person name="Carter N.M."/>
            <person name="Choi S.-K."/>
            <person name="Codani J.-J."/>
            <person name="Connerton I.F."/>
            <person name="Cummings N.J."/>
            <person name="Daniel R.A."/>
            <person name="Denizot F."/>
            <person name="Devine K.M."/>
            <person name="Duesterhoeft A."/>
            <person name="Ehrlich S.D."/>
            <person name="Emmerson P.T."/>
            <person name="Entian K.-D."/>
            <person name="Errington J."/>
            <person name="Fabret C."/>
            <person name="Ferrari E."/>
            <person name="Foulger D."/>
            <person name="Fritz C."/>
            <person name="Fujita M."/>
            <person name="Fujita Y."/>
            <person name="Fuma S."/>
            <person name="Galizzi A."/>
            <person name="Galleron N."/>
            <person name="Ghim S.-Y."/>
            <person name="Glaser P."/>
            <person name="Goffeau A."/>
            <person name="Golightly E.J."/>
            <person name="Grandi G."/>
            <person name="Guiseppi G."/>
            <person name="Guy B.J."/>
            <person name="Haga K."/>
            <person name="Haiech J."/>
            <person name="Harwood C.R."/>
            <person name="Henaut A."/>
            <person name="Hilbert H."/>
            <person name="Holsappel S."/>
            <person name="Hosono S."/>
            <person name="Hullo M.-F."/>
            <person name="Itaya M."/>
            <person name="Jones L.-M."/>
            <person name="Joris B."/>
            <person name="Karamata D."/>
            <person name="Kasahara Y."/>
            <person name="Klaerr-Blanchard M."/>
            <person name="Klein C."/>
            <person name="Kobayashi Y."/>
            <person name="Koetter P."/>
            <person name="Koningstein G."/>
            <person name="Krogh S."/>
            <person name="Kumano M."/>
            <person name="Kurita K."/>
            <person name="Lapidus A."/>
            <person name="Lardinois S."/>
            <person name="Lauber J."/>
            <person name="Lazarevic V."/>
            <person name="Lee S.-M."/>
            <person name="Levine A."/>
            <person name="Liu H."/>
            <person name="Masuda S."/>
            <person name="Mauel C."/>
            <person name="Medigue C."/>
            <person name="Medina N."/>
            <person name="Mellado R.P."/>
            <person name="Mizuno M."/>
            <person name="Moestl D."/>
            <person name="Nakai S."/>
            <person name="Noback M."/>
            <person name="Noone D."/>
            <person name="O'Reilly M."/>
            <person name="Ogawa K."/>
            <person name="Ogiwara A."/>
            <person name="Oudega B."/>
            <person name="Park S.-H."/>
            <person name="Parro V."/>
            <person name="Pohl T.M."/>
            <person name="Portetelle D."/>
            <person name="Porwollik S."/>
            <person name="Prescott A.M."/>
            <person name="Presecan E."/>
            <person name="Pujic P."/>
            <person name="Purnelle B."/>
            <person name="Rapoport G."/>
            <person name="Rey M."/>
            <person name="Reynolds S."/>
            <person name="Rieger M."/>
            <person name="Rivolta C."/>
            <person name="Rocha E."/>
            <person name="Roche B."/>
            <person name="Rose M."/>
            <person name="Sadaie Y."/>
            <person name="Sato T."/>
            <person name="Scanlan E."/>
            <person name="Schleich S."/>
            <person name="Schroeter R."/>
            <person name="Scoffone F."/>
            <person name="Sekiguchi J."/>
            <person name="Sekowska A."/>
            <person name="Seror S.J."/>
            <person name="Serror P."/>
            <person name="Shin B.-S."/>
            <person name="Soldo B."/>
            <person name="Sorokin A."/>
            <person name="Tacconi E."/>
            <person name="Takagi T."/>
            <person name="Takahashi H."/>
            <person name="Takemaru K."/>
            <person name="Takeuchi M."/>
            <person name="Tamakoshi A."/>
            <person name="Tanaka T."/>
            <person name="Terpstra P."/>
            <person name="Tognoni A."/>
            <person name="Tosato V."/>
            <person name="Uchiyama S."/>
            <person name="Vandenbol M."/>
            <person name="Vannier F."/>
            <person name="Vassarotti A."/>
            <person name="Viari A."/>
            <person name="Wambutt R."/>
            <person name="Wedler E."/>
            <person name="Wedler H."/>
            <person name="Weitzenegger T."/>
            <person name="Winters P."/>
            <person name="Wipat A."/>
            <person name="Yamamoto H."/>
            <person name="Yamane K."/>
            <person name="Yasumoto K."/>
            <person name="Yata K."/>
            <person name="Yoshida K."/>
            <person name="Yoshikawa H.-F."/>
            <person name="Zumstein E."/>
            <person name="Yoshikawa H."/>
            <person name="Danchin A."/>
        </authorList>
    </citation>
    <scope>NUCLEOTIDE SEQUENCE [LARGE SCALE GENOMIC DNA]</scope>
    <source>
        <strain>168</strain>
    </source>
</reference>
<reference key="2">
    <citation type="journal article" date="2007" name="Microbiology">
        <title>CsoR regulates the copper efflux operon copZA in Bacillus subtilis.</title>
        <authorList>
            <person name="Smaldone G.T."/>
            <person name="Helmann J.D."/>
        </authorList>
    </citation>
    <scope>FUNCTION AS A COPZA REGULATOR</scope>
    <scope>DNA-BINDING</scope>
    <scope>DISRUPTION PHENOTYPE</scope>
    <source>
        <strain>168 / CU1065</strain>
    </source>
</reference>
<reference key="3">
    <citation type="journal article" date="2009" name="Biochemistry">
        <title>Molecular insights into the metal selectivity of the copper(I)-sensing repressor csoR from Bacillus subtilis.</title>
        <authorList>
            <person name="Ma Z."/>
            <person name="Cowart D.M."/>
            <person name="Scott R.A."/>
            <person name="Giedroc D.P."/>
        </authorList>
    </citation>
    <scope>SUBUNIT</scope>
    <scope>DNA-BINDING</scope>
    <scope>REGULATION BY COPPER</scope>
    <scope>MUTAGENESIS OF GLU-90</scope>
    <source>
        <strain>168 / CU1065</strain>
    </source>
</reference>
<reference key="4">
    <citation type="journal article" date="2009" name="J. Bacteriol.">
        <title>Copper acquisition is mediated by ycnJ and regulated by ycnK and csoR in Bacillus subtilis.</title>
        <authorList>
            <person name="Chillappagari S."/>
            <person name="Miethke M."/>
            <person name="Trip H."/>
            <person name="Kuipers O.P."/>
            <person name="Marahiel M.A."/>
        </authorList>
    </citation>
    <scope>FUNCTION AS CUTJ/YCNJ REGULATOR</scope>
    <source>
        <strain>ATCC 21332 / IAM 1213</strain>
    </source>
</reference>
<gene>
    <name type="primary">csoR</name>
    <name type="synonym">yvgZ</name>
    <name type="ordered locus">BSU33520</name>
</gene>
<dbReference type="EMBL" id="AL009126">
    <property type="protein sequence ID" value="CAB15357.1"/>
    <property type="molecule type" value="Genomic_DNA"/>
</dbReference>
<dbReference type="PIR" id="G70041">
    <property type="entry name" value="G70041"/>
</dbReference>
<dbReference type="RefSeq" id="NP_391232.1">
    <property type="nucleotide sequence ID" value="NC_000964.3"/>
</dbReference>
<dbReference type="RefSeq" id="WP_003228404.1">
    <property type="nucleotide sequence ID" value="NZ_OZ025638.1"/>
</dbReference>
<dbReference type="SMR" id="O32222"/>
<dbReference type="FunCoup" id="O32222">
    <property type="interactions" value="232"/>
</dbReference>
<dbReference type="STRING" id="224308.BSU33520"/>
<dbReference type="PaxDb" id="224308-BSU33520"/>
<dbReference type="DNASU" id="936038"/>
<dbReference type="EnsemblBacteria" id="CAB15357">
    <property type="protein sequence ID" value="CAB15357"/>
    <property type="gene ID" value="BSU_33520"/>
</dbReference>
<dbReference type="GeneID" id="86872103"/>
<dbReference type="GeneID" id="936038"/>
<dbReference type="KEGG" id="bsu:BSU33520"/>
<dbReference type="PATRIC" id="fig|224308.179.peg.3637"/>
<dbReference type="eggNOG" id="COG1937">
    <property type="taxonomic scope" value="Bacteria"/>
</dbReference>
<dbReference type="InParanoid" id="O32222"/>
<dbReference type="OrthoDB" id="9811244at2"/>
<dbReference type="PhylomeDB" id="O32222"/>
<dbReference type="BioCyc" id="BSUB:BSU33520-MONOMER"/>
<dbReference type="Proteomes" id="UP000001570">
    <property type="component" value="Chromosome"/>
</dbReference>
<dbReference type="GO" id="GO:0005737">
    <property type="term" value="C:cytoplasm"/>
    <property type="evidence" value="ECO:0007669"/>
    <property type="project" value="UniProtKB-SubCell"/>
</dbReference>
<dbReference type="GO" id="GO:0032993">
    <property type="term" value="C:protein-DNA complex"/>
    <property type="evidence" value="ECO:0000353"/>
    <property type="project" value="CollecTF"/>
</dbReference>
<dbReference type="GO" id="GO:0001217">
    <property type="term" value="F:DNA-binding transcription repressor activity"/>
    <property type="evidence" value="ECO:0000353"/>
    <property type="project" value="CollecTF"/>
</dbReference>
<dbReference type="GO" id="GO:0046872">
    <property type="term" value="F:metal ion binding"/>
    <property type="evidence" value="ECO:0007669"/>
    <property type="project" value="UniProtKB-KW"/>
</dbReference>
<dbReference type="GO" id="GO:0000976">
    <property type="term" value="F:transcription cis-regulatory region binding"/>
    <property type="evidence" value="ECO:0000353"/>
    <property type="project" value="CollecTF"/>
</dbReference>
<dbReference type="GO" id="GO:0045892">
    <property type="term" value="P:negative regulation of DNA-templated transcription"/>
    <property type="evidence" value="ECO:0000318"/>
    <property type="project" value="GO_Central"/>
</dbReference>
<dbReference type="CDD" id="cd10157">
    <property type="entry name" value="BsCsoR-like_DUF156"/>
    <property type="match status" value="1"/>
</dbReference>
<dbReference type="FunFam" id="1.20.58.1000:FF:000003">
    <property type="entry name" value="CopY family transcriptional regulator"/>
    <property type="match status" value="1"/>
</dbReference>
<dbReference type="Gene3D" id="1.20.58.1000">
    <property type="entry name" value="Metal-sensitive repressor, helix protomer"/>
    <property type="match status" value="1"/>
</dbReference>
<dbReference type="InterPro" id="IPR003735">
    <property type="entry name" value="Metal_Tscrpt_repr"/>
</dbReference>
<dbReference type="InterPro" id="IPR038390">
    <property type="entry name" value="Metal_Tscrpt_repr_sf"/>
</dbReference>
<dbReference type="PANTHER" id="PTHR33677:SF3">
    <property type="entry name" value="COPPER-SENSING TRANSCRIPTIONAL REPRESSOR RICR"/>
    <property type="match status" value="1"/>
</dbReference>
<dbReference type="PANTHER" id="PTHR33677">
    <property type="entry name" value="TRANSCRIPTIONAL REPRESSOR FRMR-RELATED"/>
    <property type="match status" value="1"/>
</dbReference>
<dbReference type="Pfam" id="PF02583">
    <property type="entry name" value="Trns_repr_metal"/>
    <property type="match status" value="1"/>
</dbReference>
<name>CSOR_BACSU</name>
<feature type="chain" id="PRO_0000377725" description="Copper-sensing transcriptional repressor CsoR">
    <location>
        <begin position="1"/>
        <end position="101"/>
    </location>
</feature>
<feature type="region of interest" description="Disordered" evidence="2">
    <location>
        <begin position="1"/>
        <end position="22"/>
    </location>
</feature>
<feature type="binding site" description="in other chain" evidence="1">
    <location>
        <position position="45"/>
    </location>
    <ligand>
        <name>Cu cation</name>
        <dbReference type="ChEBI" id="CHEBI:23378"/>
        <note>ligand shared between dimeric partners</note>
    </ligand>
</feature>
<feature type="binding site" evidence="1">
    <location>
        <position position="70"/>
    </location>
    <ligand>
        <name>Cu cation</name>
        <dbReference type="ChEBI" id="CHEBI:23378"/>
        <note>ligand shared between dimeric partners</note>
    </ligand>
</feature>
<feature type="binding site" evidence="1">
    <location>
        <position position="74"/>
    </location>
    <ligand>
        <name>Cu cation</name>
        <dbReference type="ChEBI" id="CHEBI:23378"/>
        <note>ligand shared between dimeric partners</note>
    </ligand>
</feature>
<feature type="mutagenesis site" description="Abolishes negative regulation of DNA binding, without significantly interfering with the Cu(1+) affinity or coordination geometry." evidence="5">
    <original>E</original>
    <variation>A</variation>
    <location>
        <position position="90"/>
    </location>
</feature>
<sequence>MEKHNEHKTLNHKSSKEKDQITNRLKRIEGQVRGIQNMVENDRYCVDILVQISAVQAAMKNVALHLLEDHAHHCVADAIKSGDGEQAISELLDVFKKFTKS</sequence>
<organism>
    <name type="scientific">Bacillus subtilis (strain 168)</name>
    <dbReference type="NCBI Taxonomy" id="224308"/>
    <lineage>
        <taxon>Bacteria</taxon>
        <taxon>Bacillati</taxon>
        <taxon>Bacillota</taxon>
        <taxon>Bacilli</taxon>
        <taxon>Bacillales</taxon>
        <taxon>Bacillaceae</taxon>
        <taxon>Bacillus</taxon>
    </lineage>
</organism>
<comment type="function">
    <text evidence="3 4">Copper-sensitive repressor that has a key role in copper homeostasis. Negatively regulates expression of the copZA operon and of cutJ/ycnJ. In the absence of copper ions, binds with high affinity to the copZA promoter and represses the transcription. In the presence of copper ions, CsoR binds Cu(1+), which significantly decreases its DNA binding affinity and leads to the transcription of the genes.</text>
</comment>
<comment type="subunit">
    <text evidence="5">Homotetramer. Binds DNA with a stoichiometry of 2 tetramers per DNA.</text>
</comment>
<comment type="subcellular location">
    <subcellularLocation>
        <location evidence="1">Cytoplasm</location>
    </subcellularLocation>
</comment>
<comment type="disruption phenotype">
    <text evidence="3">Cells lacking this gene display a slightly enhanced ability to grow into medium containing high levels of copper.</text>
</comment>
<comment type="miscellaneous">
    <text>Can also bind other divalent metal ions (zinc, cobalt and nickel), but these metals are poor regulators of DNA binding.</text>
</comment>
<comment type="similarity">
    <text evidence="6">Belongs to the CsoR family.</text>
</comment>
<protein>
    <recommendedName>
        <fullName>Copper-sensing transcriptional repressor CsoR</fullName>
    </recommendedName>
    <alternativeName>
        <fullName>Copper-sensitive operon repressor</fullName>
    </alternativeName>
</protein>